<reference key="1">
    <citation type="journal article" date="2002" name="Nature">
        <title>The genome sequence of Schizosaccharomyces pombe.</title>
        <authorList>
            <person name="Wood V."/>
            <person name="Gwilliam R."/>
            <person name="Rajandream M.A."/>
            <person name="Lyne M.H."/>
            <person name="Lyne R."/>
            <person name="Stewart A."/>
            <person name="Sgouros J.G."/>
            <person name="Peat N."/>
            <person name="Hayles J."/>
            <person name="Baker S.G."/>
            <person name="Basham D."/>
            <person name="Bowman S."/>
            <person name="Brooks K."/>
            <person name="Brown D."/>
            <person name="Brown S."/>
            <person name="Chillingworth T."/>
            <person name="Churcher C.M."/>
            <person name="Collins M."/>
            <person name="Connor R."/>
            <person name="Cronin A."/>
            <person name="Davis P."/>
            <person name="Feltwell T."/>
            <person name="Fraser A."/>
            <person name="Gentles S."/>
            <person name="Goble A."/>
            <person name="Hamlin N."/>
            <person name="Harris D.E."/>
            <person name="Hidalgo J."/>
            <person name="Hodgson G."/>
            <person name="Holroyd S."/>
            <person name="Hornsby T."/>
            <person name="Howarth S."/>
            <person name="Huckle E.J."/>
            <person name="Hunt S."/>
            <person name="Jagels K."/>
            <person name="James K.D."/>
            <person name="Jones L."/>
            <person name="Jones M."/>
            <person name="Leather S."/>
            <person name="McDonald S."/>
            <person name="McLean J."/>
            <person name="Mooney P."/>
            <person name="Moule S."/>
            <person name="Mungall K.L."/>
            <person name="Murphy L.D."/>
            <person name="Niblett D."/>
            <person name="Odell C."/>
            <person name="Oliver K."/>
            <person name="O'Neil S."/>
            <person name="Pearson D."/>
            <person name="Quail M.A."/>
            <person name="Rabbinowitsch E."/>
            <person name="Rutherford K.M."/>
            <person name="Rutter S."/>
            <person name="Saunders D."/>
            <person name="Seeger K."/>
            <person name="Sharp S."/>
            <person name="Skelton J."/>
            <person name="Simmonds M.N."/>
            <person name="Squares R."/>
            <person name="Squares S."/>
            <person name="Stevens K."/>
            <person name="Taylor K."/>
            <person name="Taylor R.G."/>
            <person name="Tivey A."/>
            <person name="Walsh S.V."/>
            <person name="Warren T."/>
            <person name="Whitehead S."/>
            <person name="Woodward J.R."/>
            <person name="Volckaert G."/>
            <person name="Aert R."/>
            <person name="Robben J."/>
            <person name="Grymonprez B."/>
            <person name="Weltjens I."/>
            <person name="Vanstreels E."/>
            <person name="Rieger M."/>
            <person name="Schaefer M."/>
            <person name="Mueller-Auer S."/>
            <person name="Gabel C."/>
            <person name="Fuchs M."/>
            <person name="Duesterhoeft A."/>
            <person name="Fritzc C."/>
            <person name="Holzer E."/>
            <person name="Moestl D."/>
            <person name="Hilbert H."/>
            <person name="Borzym K."/>
            <person name="Langer I."/>
            <person name="Beck A."/>
            <person name="Lehrach H."/>
            <person name="Reinhardt R."/>
            <person name="Pohl T.M."/>
            <person name="Eger P."/>
            <person name="Zimmermann W."/>
            <person name="Wedler H."/>
            <person name="Wambutt R."/>
            <person name="Purnelle B."/>
            <person name="Goffeau A."/>
            <person name="Cadieu E."/>
            <person name="Dreano S."/>
            <person name="Gloux S."/>
            <person name="Lelaure V."/>
            <person name="Mottier S."/>
            <person name="Galibert F."/>
            <person name="Aves S.J."/>
            <person name="Xiang Z."/>
            <person name="Hunt C."/>
            <person name="Moore K."/>
            <person name="Hurst S.M."/>
            <person name="Lucas M."/>
            <person name="Rochet M."/>
            <person name="Gaillardin C."/>
            <person name="Tallada V.A."/>
            <person name="Garzon A."/>
            <person name="Thode G."/>
            <person name="Daga R.R."/>
            <person name="Cruzado L."/>
            <person name="Jimenez J."/>
            <person name="Sanchez M."/>
            <person name="del Rey F."/>
            <person name="Benito J."/>
            <person name="Dominguez A."/>
            <person name="Revuelta J.L."/>
            <person name="Moreno S."/>
            <person name="Armstrong J."/>
            <person name="Forsburg S.L."/>
            <person name="Cerutti L."/>
            <person name="Lowe T."/>
            <person name="McCombie W.R."/>
            <person name="Paulsen I."/>
            <person name="Potashkin J."/>
            <person name="Shpakovski G.V."/>
            <person name="Ussery D."/>
            <person name="Barrell B.G."/>
            <person name="Nurse P."/>
        </authorList>
    </citation>
    <scope>NUCLEOTIDE SEQUENCE [LARGE SCALE GENOMIC DNA]</scope>
    <source>
        <strain>972 / ATCC 24843</strain>
    </source>
</reference>
<reference key="2">
    <citation type="journal article" date="2006" name="Nat. Biotechnol.">
        <title>ORFeome cloning and global analysis of protein localization in the fission yeast Schizosaccharomyces pombe.</title>
        <authorList>
            <person name="Matsuyama A."/>
            <person name="Arai R."/>
            <person name="Yashiroda Y."/>
            <person name="Shirai A."/>
            <person name="Kamata A."/>
            <person name="Sekido S."/>
            <person name="Kobayashi Y."/>
            <person name="Hashimoto A."/>
            <person name="Hamamoto M."/>
            <person name="Hiraoka Y."/>
            <person name="Horinouchi S."/>
            <person name="Yoshida M."/>
        </authorList>
    </citation>
    <scope>SUBCELLULAR LOCATION [LARGE SCALE ANALYSIS]</scope>
</reference>
<reference key="3">
    <citation type="journal article" date="2007" name="Genes Cells">
        <title>Rapamycin sensitivity of the Schizosaccharomyces pombe tor2 mutant and organization of two highly phosphorylated TOR complexes by specific and common subunits.</title>
        <authorList>
            <person name="Hayashi T."/>
            <person name="Hatanaka M."/>
            <person name="Nagao K."/>
            <person name="Nakaseko Y."/>
            <person name="Kanoh J."/>
            <person name="Kokubu A."/>
            <person name="Ebe M."/>
            <person name="Yanagida M."/>
        </authorList>
    </citation>
    <scope>IDENTIFICATION IN THE TORC1 COMPLEX</scope>
    <scope>PHOSPHORYLATION AT SER-70</scope>
    <scope>IDENTIFICATION BY MASS SPECTROMETRY</scope>
</reference>
<accession>O74428</accession>
<accession>Q7LL02</accession>
<evidence type="ECO:0000256" key="1">
    <source>
        <dbReference type="SAM" id="MobiDB-lite"/>
    </source>
</evidence>
<evidence type="ECO:0000269" key="2">
    <source>
    </source>
</evidence>
<evidence type="ECO:0000269" key="3">
    <source>
    </source>
</evidence>
<evidence type="ECO:0000303" key="4">
    <source>
    </source>
</evidence>
<evidence type="ECO:0000305" key="5"/>
<evidence type="ECO:0000305" key="6">
    <source>
    </source>
</evidence>
<evidence type="ECO:0000312" key="7">
    <source>
        <dbReference type="PomBase" id="SPCC162.12"/>
    </source>
</evidence>
<organism>
    <name type="scientific">Schizosaccharomyces pombe (strain 972 / ATCC 24843)</name>
    <name type="common">Fission yeast</name>
    <dbReference type="NCBI Taxonomy" id="284812"/>
    <lineage>
        <taxon>Eukaryota</taxon>
        <taxon>Fungi</taxon>
        <taxon>Dikarya</taxon>
        <taxon>Ascomycota</taxon>
        <taxon>Taphrinomycotina</taxon>
        <taxon>Schizosaccharomycetes</taxon>
        <taxon>Schizosaccharomycetales</taxon>
        <taxon>Schizosaccharomycetaceae</taxon>
        <taxon>Schizosaccharomyces</taxon>
    </lineage>
</organism>
<comment type="function">
    <text evidence="6">Component of TORC1, which regulates multiple cellular processes to control cell growth in response to environmental signals. Tor2 is essential for growth. Nutrient limitation and environmental stress signals cause inactivation of TORC1. Active TORC1 positively controls cell growth and ribosome biogenesis by regulating ribosomal protein gene expression. TORC1 negatively controls G1 cell-cycle arrest, sexual development and amino acid uptake. Represses mating, meiosis and sporulation efficiency by interfering with the functions of the transcription factor ste11 and the meiosis-promoting RNA-binding protein mei2.</text>
</comment>
<comment type="subunit">
    <text evidence="3">The target of rapamycin complex 1 (TORC1) is composed of at least mip1, pop3/wat1, tco89, toc1 and tor2.</text>
</comment>
<comment type="subcellular location">
    <subcellularLocation>
        <location evidence="2">Cytoplasm</location>
    </subcellularLocation>
    <text>Localizes at the barrier septum.</text>
</comment>
<comment type="PTM">
    <text evidence="3">Either Thr-10, Ser-11, Ser-12, Ser-13 or Thr-14 and Ser-214 or Ser-215 and Ser-247 or Ser-249 are phosphorylated as well.</text>
</comment>
<comment type="similarity">
    <text evidence="5">Belongs to the TORC subunit TCO89 family.</text>
</comment>
<keyword id="KW-0131">Cell cycle</keyword>
<keyword id="KW-0963">Cytoplasm</keyword>
<keyword id="KW-0469">Meiosis</keyword>
<keyword id="KW-0597">Phosphoprotein</keyword>
<keyword id="KW-1185">Reference proteome</keyword>
<keyword id="KW-0749">Sporulation</keyword>
<feature type="chain" id="PRO_0000304086" description="Target of rapamycin complex 1 subunit tco89">
    <location>
        <begin position="1"/>
        <end position="451"/>
    </location>
</feature>
<feature type="region of interest" description="Disordered" evidence="1">
    <location>
        <begin position="1"/>
        <end position="35"/>
    </location>
</feature>
<feature type="region of interest" description="Disordered" evidence="1">
    <location>
        <begin position="122"/>
        <end position="164"/>
    </location>
</feature>
<feature type="region of interest" description="Disordered" evidence="1">
    <location>
        <begin position="176"/>
        <end position="264"/>
    </location>
</feature>
<feature type="region of interest" description="Disordered" evidence="1">
    <location>
        <begin position="362"/>
        <end position="437"/>
    </location>
</feature>
<feature type="compositionally biased region" description="Low complexity" evidence="1">
    <location>
        <begin position="7"/>
        <end position="17"/>
    </location>
</feature>
<feature type="compositionally biased region" description="Polar residues" evidence="1">
    <location>
        <begin position="129"/>
        <end position="162"/>
    </location>
</feature>
<feature type="compositionally biased region" description="Low complexity" evidence="1">
    <location>
        <begin position="203"/>
        <end position="215"/>
    </location>
</feature>
<feature type="compositionally biased region" description="Polar residues" evidence="1">
    <location>
        <begin position="228"/>
        <end position="242"/>
    </location>
</feature>
<feature type="compositionally biased region" description="Polar residues" evidence="1">
    <location>
        <begin position="362"/>
        <end position="376"/>
    </location>
</feature>
<feature type="compositionally biased region" description="Polar residues" evidence="1">
    <location>
        <begin position="407"/>
        <end position="417"/>
    </location>
</feature>
<feature type="compositionally biased region" description="Basic residues" evidence="1">
    <location>
        <begin position="419"/>
        <end position="430"/>
    </location>
</feature>
<feature type="modified residue" description="Phosphoserine" evidence="3">
    <location>
        <position position="70"/>
    </location>
</feature>
<proteinExistence type="evidence at protein level"/>
<dbReference type="EMBL" id="CU329672">
    <property type="protein sequence ID" value="CAA22780.1"/>
    <property type="molecule type" value="Genomic_DNA"/>
</dbReference>
<dbReference type="PIR" id="T41129">
    <property type="entry name" value="T41129"/>
</dbReference>
<dbReference type="RefSeq" id="NP_588232.1">
    <property type="nucleotide sequence ID" value="NM_001023222.2"/>
</dbReference>
<dbReference type="BioGRID" id="275567">
    <property type="interactions" value="43"/>
</dbReference>
<dbReference type="FunCoup" id="O74428">
    <property type="interactions" value="7"/>
</dbReference>
<dbReference type="IntAct" id="O74428">
    <property type="interactions" value="1"/>
</dbReference>
<dbReference type="STRING" id="284812.O74428"/>
<dbReference type="iPTMnet" id="O74428"/>
<dbReference type="PaxDb" id="4896-SPCC162.12.1"/>
<dbReference type="EnsemblFungi" id="SPCC162.12.1">
    <property type="protein sequence ID" value="SPCC162.12.1:pep"/>
    <property type="gene ID" value="SPCC162.12"/>
</dbReference>
<dbReference type="GeneID" id="2538993"/>
<dbReference type="KEGG" id="spo:2538993"/>
<dbReference type="PomBase" id="SPCC162.12">
    <property type="gene designation" value="tco89"/>
</dbReference>
<dbReference type="VEuPathDB" id="FungiDB:SPCC162.12"/>
<dbReference type="HOGENOM" id="CLU_534367_0_0_1"/>
<dbReference type="InParanoid" id="O74428"/>
<dbReference type="OMA" id="REIVYEF"/>
<dbReference type="PRO" id="PR:O74428"/>
<dbReference type="Proteomes" id="UP000002485">
    <property type="component" value="Chromosome III"/>
</dbReference>
<dbReference type="GO" id="GO:0032153">
    <property type="term" value="C:cell division site"/>
    <property type="evidence" value="ECO:0007005"/>
    <property type="project" value="PomBase"/>
</dbReference>
<dbReference type="GO" id="GO:0005737">
    <property type="term" value="C:cytoplasm"/>
    <property type="evidence" value="ECO:0007005"/>
    <property type="project" value="PomBase"/>
</dbReference>
<dbReference type="GO" id="GO:0005829">
    <property type="term" value="C:cytosol"/>
    <property type="evidence" value="ECO:0007005"/>
    <property type="project" value="PomBase"/>
</dbReference>
<dbReference type="GO" id="GO:0031931">
    <property type="term" value="C:TORC1 complex"/>
    <property type="evidence" value="ECO:0000314"/>
    <property type="project" value="PomBase"/>
</dbReference>
<dbReference type="GO" id="GO:0051321">
    <property type="term" value="P:meiotic cell cycle"/>
    <property type="evidence" value="ECO:0007669"/>
    <property type="project" value="UniProtKB-KW"/>
</dbReference>
<dbReference type="GO" id="GO:0030435">
    <property type="term" value="P:sporulation resulting in formation of a cellular spore"/>
    <property type="evidence" value="ECO:0007669"/>
    <property type="project" value="UniProtKB-KW"/>
</dbReference>
<dbReference type="GO" id="GO:0038202">
    <property type="term" value="P:TORC1 signaling"/>
    <property type="evidence" value="ECO:0000305"/>
    <property type="project" value="PomBase"/>
</dbReference>
<dbReference type="InterPro" id="IPR018857">
    <property type="entry name" value="TORC1_cplx_su_TCO89"/>
</dbReference>
<dbReference type="Pfam" id="PF10452">
    <property type="entry name" value="TCO89"/>
    <property type="match status" value="3"/>
</dbReference>
<name>TCO89_SCHPO</name>
<sequence length="451" mass="49212">MERPSLSRRTSSSTVSTDGEGVYSRSTKERKRNFIVNSRLKRGGGHVRVNRSGRLGSVTMRPSALTRAHSQNPNSSLVNNSSAVSHLTKQRSLNDLHELNGPKHVAKNGLIPLTQRKPNCVWDDAPVDNDSTAGNLDSDSALPTPSVTTNEAADSSRASSPVTRVVAVHDNKKKIINSNISNAPPFNNTDVQASARPPAAGQDDSAADASTTKSSPVHNEVMAEPLPHSNNREVTQATNQPKWQIHSGSDIASEPPTLSRGNSLSLLANRKVPSTNVKKSQAELYDLGSSTSRTQQKLLIQRASSKFDIVEDDMDTNPSKRFSNPHTKHIMDLVRTQYRNVLRTRELIPEFLEKIRSSYSNNQNFDSQNAFNTSAAGTAGTREETISNGQNGIVASAETSKKDDGVQSASLNASMSARSHARQRSIHVPKTRKDTDYESIHQKLLQLWSQG</sequence>
<gene>
    <name evidence="4" type="primary">tco89</name>
    <name evidence="7" type="ORF">SPCC162.12</name>
    <name type="ORF">SPCC1753.06c</name>
</gene>
<protein>
    <recommendedName>
        <fullName evidence="4">Target of rapamycin complex 1 subunit tco89</fullName>
        <shortName>TORC1 subunit tco89</shortName>
    </recommendedName>
</protein>